<feature type="chain" id="PRO_0000264292" description="Protein-glutamate methylesterase/protein-glutamine glutaminase 1">
    <location>
        <begin position="1"/>
        <end position="345"/>
    </location>
</feature>
<feature type="domain" description="Response regulatory" evidence="1">
    <location>
        <begin position="8"/>
        <end position="123"/>
    </location>
</feature>
<feature type="domain" description="CheB-type methylesterase" evidence="1">
    <location>
        <begin position="151"/>
        <end position="344"/>
    </location>
</feature>
<feature type="active site" evidence="1">
    <location>
        <position position="163"/>
    </location>
</feature>
<feature type="active site" evidence="1">
    <location>
        <position position="190"/>
    </location>
</feature>
<feature type="active site" evidence="1">
    <location>
        <position position="286"/>
    </location>
</feature>
<feature type="modified residue" description="4-aspartylphosphate" evidence="1">
    <location>
        <position position="59"/>
    </location>
</feature>
<evidence type="ECO:0000255" key="1">
    <source>
        <dbReference type="HAMAP-Rule" id="MF_00099"/>
    </source>
</evidence>
<reference key="1">
    <citation type="journal article" date="2006" name="Proc. Natl. Acad. Sci. U.S.A.">
        <title>Evolution of sensory complexity recorded in a myxobacterial genome.</title>
        <authorList>
            <person name="Goldman B.S."/>
            <person name="Nierman W.C."/>
            <person name="Kaiser D."/>
            <person name="Slater S.C."/>
            <person name="Durkin A.S."/>
            <person name="Eisen J.A."/>
            <person name="Ronning C.M."/>
            <person name="Barbazuk W.B."/>
            <person name="Blanchard M."/>
            <person name="Field C."/>
            <person name="Halling C."/>
            <person name="Hinkle G."/>
            <person name="Iartchuk O."/>
            <person name="Kim H.S."/>
            <person name="Mackenzie C."/>
            <person name="Madupu R."/>
            <person name="Miller N."/>
            <person name="Shvartsbeyn A."/>
            <person name="Sullivan S.A."/>
            <person name="Vaudin M."/>
            <person name="Wiegand R."/>
            <person name="Kaplan H.B."/>
        </authorList>
    </citation>
    <scope>NUCLEOTIDE SEQUENCE [LARGE SCALE GENOMIC DNA]</scope>
    <source>
        <strain>DK1622</strain>
    </source>
</reference>
<sequence length="345" mass="36756">MSSKGVISVLVIDDSAHNRRTLSTMLESEPDVRVVDRAADGEEGLKKVVDLKPDVVTLDLEMPKLGGYTFLRLLMRTAPTPVIVISSYSHRSDVFKALELGAFDFIAKPQHPTFEAMEALRVELLEKVRAARHVRPGYRHAAPGARAMAVAGEPPLVVAVGASTGGPPAVQRVLEGLAVEPTPCVLVCQHMPPQFTRAFADRLDRIGPFSVTEARDGDLVQPGHVYIAPGGRHMVVAERGSRLELQTPPPTPVDKYAPCVDRLFVSMAQVLGAKALGVVLTGMGADGAEGARAVHRAGGEVWAQSEETSVVFGMPGEAIATGAVKRVIPLGDIGPALAALARRRR</sequence>
<accession>Q1D359</accession>
<organism>
    <name type="scientific">Myxococcus xanthus (strain DK1622)</name>
    <dbReference type="NCBI Taxonomy" id="246197"/>
    <lineage>
        <taxon>Bacteria</taxon>
        <taxon>Pseudomonadati</taxon>
        <taxon>Myxococcota</taxon>
        <taxon>Myxococcia</taxon>
        <taxon>Myxococcales</taxon>
        <taxon>Cystobacterineae</taxon>
        <taxon>Myxococcaceae</taxon>
        <taxon>Myxococcus</taxon>
    </lineage>
</organism>
<comment type="function">
    <text evidence="1">Involved in chemotaxis. Part of a chemotaxis signal transduction system that modulates chemotaxis in response to various stimuli. Catalyzes the demethylation of specific methylglutamate residues introduced into the chemoreceptors (methyl-accepting chemotaxis proteins or MCP) by CheR. Also mediates the irreversible deamidation of specific glutamine residues to glutamic acid.</text>
</comment>
<comment type="catalytic activity">
    <reaction evidence="1">
        <text>[protein]-L-glutamate 5-O-methyl ester + H2O = L-glutamyl-[protein] + methanol + H(+)</text>
        <dbReference type="Rhea" id="RHEA:23236"/>
        <dbReference type="Rhea" id="RHEA-COMP:10208"/>
        <dbReference type="Rhea" id="RHEA-COMP:10311"/>
        <dbReference type="ChEBI" id="CHEBI:15377"/>
        <dbReference type="ChEBI" id="CHEBI:15378"/>
        <dbReference type="ChEBI" id="CHEBI:17790"/>
        <dbReference type="ChEBI" id="CHEBI:29973"/>
        <dbReference type="ChEBI" id="CHEBI:82795"/>
        <dbReference type="EC" id="3.1.1.61"/>
    </reaction>
</comment>
<comment type="catalytic activity">
    <reaction evidence="1">
        <text>L-glutaminyl-[protein] + H2O = L-glutamyl-[protein] + NH4(+)</text>
        <dbReference type="Rhea" id="RHEA:16441"/>
        <dbReference type="Rhea" id="RHEA-COMP:10207"/>
        <dbReference type="Rhea" id="RHEA-COMP:10208"/>
        <dbReference type="ChEBI" id="CHEBI:15377"/>
        <dbReference type="ChEBI" id="CHEBI:28938"/>
        <dbReference type="ChEBI" id="CHEBI:29973"/>
        <dbReference type="ChEBI" id="CHEBI:30011"/>
        <dbReference type="EC" id="3.5.1.44"/>
    </reaction>
</comment>
<comment type="subcellular location">
    <subcellularLocation>
        <location evidence="1">Cytoplasm</location>
    </subcellularLocation>
</comment>
<comment type="domain">
    <text evidence="1">Contains a C-terminal catalytic domain, and an N-terminal region which modulates catalytic activity.</text>
</comment>
<comment type="PTM">
    <text evidence="1">Phosphorylated by CheA. Phosphorylation of the N-terminal regulatory domain activates the methylesterase activity.</text>
</comment>
<comment type="similarity">
    <text evidence="1">Belongs to the CheB family.</text>
</comment>
<dbReference type="EC" id="3.1.1.61" evidence="1"/>
<dbReference type="EC" id="3.5.1.44" evidence="1"/>
<dbReference type="EMBL" id="CP000113">
    <property type="protein sequence ID" value="ABF87312.1"/>
    <property type="molecule type" value="Genomic_DNA"/>
</dbReference>
<dbReference type="RefSeq" id="WP_011554739.1">
    <property type="nucleotide sequence ID" value="NC_008095.1"/>
</dbReference>
<dbReference type="SMR" id="Q1D359"/>
<dbReference type="IntAct" id="Q1D359">
    <property type="interactions" value="7"/>
</dbReference>
<dbReference type="STRING" id="246197.MXAN_4752"/>
<dbReference type="EnsemblBacteria" id="ABF87312">
    <property type="protein sequence ID" value="ABF87312"/>
    <property type="gene ID" value="MXAN_4752"/>
</dbReference>
<dbReference type="GeneID" id="41362051"/>
<dbReference type="KEGG" id="mxa:MXAN_4752"/>
<dbReference type="eggNOG" id="COG2201">
    <property type="taxonomic scope" value="Bacteria"/>
</dbReference>
<dbReference type="HOGENOM" id="CLU_000445_51_0_7"/>
<dbReference type="OrthoDB" id="9793421at2"/>
<dbReference type="Proteomes" id="UP000002402">
    <property type="component" value="Chromosome"/>
</dbReference>
<dbReference type="GO" id="GO:0005737">
    <property type="term" value="C:cytoplasm"/>
    <property type="evidence" value="ECO:0007669"/>
    <property type="project" value="UniProtKB-SubCell"/>
</dbReference>
<dbReference type="GO" id="GO:0000156">
    <property type="term" value="F:phosphorelay response regulator activity"/>
    <property type="evidence" value="ECO:0007669"/>
    <property type="project" value="InterPro"/>
</dbReference>
<dbReference type="GO" id="GO:0008984">
    <property type="term" value="F:protein-glutamate methylesterase activity"/>
    <property type="evidence" value="ECO:0007669"/>
    <property type="project" value="UniProtKB-UniRule"/>
</dbReference>
<dbReference type="GO" id="GO:0050568">
    <property type="term" value="F:protein-glutamine glutaminase activity"/>
    <property type="evidence" value="ECO:0007669"/>
    <property type="project" value="UniProtKB-UniRule"/>
</dbReference>
<dbReference type="GO" id="GO:0006935">
    <property type="term" value="P:chemotaxis"/>
    <property type="evidence" value="ECO:0007669"/>
    <property type="project" value="UniProtKB-UniRule"/>
</dbReference>
<dbReference type="CDD" id="cd16432">
    <property type="entry name" value="CheB_Rec"/>
    <property type="match status" value="1"/>
</dbReference>
<dbReference type="CDD" id="cd17541">
    <property type="entry name" value="REC_CheB-like"/>
    <property type="match status" value="1"/>
</dbReference>
<dbReference type="Gene3D" id="3.40.50.2300">
    <property type="match status" value="1"/>
</dbReference>
<dbReference type="Gene3D" id="3.40.50.180">
    <property type="entry name" value="Methylesterase CheB, C-terminal domain"/>
    <property type="match status" value="1"/>
</dbReference>
<dbReference type="HAMAP" id="MF_00099">
    <property type="entry name" value="CheB_chemtxs"/>
    <property type="match status" value="1"/>
</dbReference>
<dbReference type="InterPro" id="IPR008248">
    <property type="entry name" value="CheB-like"/>
</dbReference>
<dbReference type="InterPro" id="IPR035909">
    <property type="entry name" value="CheB_C"/>
</dbReference>
<dbReference type="InterPro" id="IPR011006">
    <property type="entry name" value="CheY-like_superfamily"/>
</dbReference>
<dbReference type="InterPro" id="IPR000673">
    <property type="entry name" value="Sig_transdc_resp-reg_Me-estase"/>
</dbReference>
<dbReference type="InterPro" id="IPR001789">
    <property type="entry name" value="Sig_transdc_resp-reg_receiver"/>
</dbReference>
<dbReference type="NCBIfam" id="NF001965">
    <property type="entry name" value="PRK00742.1"/>
    <property type="match status" value="1"/>
</dbReference>
<dbReference type="PANTHER" id="PTHR42872">
    <property type="entry name" value="PROTEIN-GLUTAMATE METHYLESTERASE/PROTEIN-GLUTAMINE GLUTAMINASE"/>
    <property type="match status" value="1"/>
</dbReference>
<dbReference type="PANTHER" id="PTHR42872:SF6">
    <property type="entry name" value="PROTEIN-GLUTAMATE METHYLESTERASE_PROTEIN-GLUTAMINE GLUTAMINASE"/>
    <property type="match status" value="1"/>
</dbReference>
<dbReference type="Pfam" id="PF01339">
    <property type="entry name" value="CheB_methylest"/>
    <property type="match status" value="1"/>
</dbReference>
<dbReference type="Pfam" id="PF00072">
    <property type="entry name" value="Response_reg"/>
    <property type="match status" value="1"/>
</dbReference>
<dbReference type="PIRSF" id="PIRSF000876">
    <property type="entry name" value="RR_chemtxs_CheB"/>
    <property type="match status" value="1"/>
</dbReference>
<dbReference type="SMART" id="SM00448">
    <property type="entry name" value="REC"/>
    <property type="match status" value="1"/>
</dbReference>
<dbReference type="SUPFAM" id="SSF52172">
    <property type="entry name" value="CheY-like"/>
    <property type="match status" value="1"/>
</dbReference>
<dbReference type="SUPFAM" id="SSF52738">
    <property type="entry name" value="Methylesterase CheB, C-terminal domain"/>
    <property type="match status" value="1"/>
</dbReference>
<dbReference type="PROSITE" id="PS50122">
    <property type="entry name" value="CHEB"/>
    <property type="match status" value="1"/>
</dbReference>
<dbReference type="PROSITE" id="PS50110">
    <property type="entry name" value="RESPONSE_REGULATORY"/>
    <property type="match status" value="1"/>
</dbReference>
<protein>
    <recommendedName>
        <fullName evidence="1">Protein-glutamate methylesterase/protein-glutamine glutaminase 1</fullName>
        <ecNumber evidence="1">3.1.1.61</ecNumber>
        <ecNumber evidence="1">3.5.1.44</ecNumber>
    </recommendedName>
</protein>
<gene>
    <name evidence="1" type="primary">cheB1</name>
    <name type="ordered locus">MXAN_4752</name>
</gene>
<keyword id="KW-0145">Chemotaxis</keyword>
<keyword id="KW-0963">Cytoplasm</keyword>
<keyword id="KW-0378">Hydrolase</keyword>
<keyword id="KW-0597">Phosphoprotein</keyword>
<keyword id="KW-1185">Reference proteome</keyword>
<name>CHEB1_MYXXD</name>
<proteinExistence type="inferred from homology"/>